<organism>
    <name type="scientific">Ethmostigmus rubripes</name>
    <name type="common">Giant centipede</name>
    <dbReference type="NCBI Taxonomy" id="62613"/>
    <lineage>
        <taxon>Eukaryota</taxon>
        <taxon>Metazoa</taxon>
        <taxon>Ecdysozoa</taxon>
        <taxon>Arthropoda</taxon>
        <taxon>Myriapoda</taxon>
        <taxon>Chilopoda</taxon>
        <taxon>Pleurostigmophora</taxon>
        <taxon>Scolopendromorpha</taxon>
        <taxon>Scolopendridae</taxon>
        <taxon>Ethmostigmus</taxon>
    </lineage>
</organism>
<sequence length="108" mass="12361">MASFTSFCVLFTFCLLLLAHQARSGERQYKTESRNGKCVGEDDQLHAPTEVWYNDNDCSEHTCVNDDTGYYEIIRRCTLIAYPDECHMINGTGPRYPQCCCKVTCELD</sequence>
<evidence type="ECO:0000255" key="1"/>
<evidence type="ECO:0000303" key="2">
    <source>
    </source>
</evidence>
<evidence type="ECO:0000305" key="3"/>
<evidence type="ECO:0000305" key="4">
    <source>
    </source>
</evidence>
<comment type="subcellular location">
    <subcellularLocation>
        <location evidence="4">Secreted</location>
    </subcellularLocation>
</comment>
<comment type="tissue specificity">
    <text evidence="4">Expressed by the venom gland.</text>
</comment>
<comment type="PTM">
    <text evidence="3">Contains 4 disulfide bonds.</text>
</comment>
<comment type="similarity">
    <text evidence="3">Belongs to the scoloptoxin-16 family.</text>
</comment>
<comment type="caution">
    <text evidence="4">All E.rubripes family members described in 'Undeheim et al., 2014' have not been imported into UniProtKB. Please, refer to this paper to access them.</text>
</comment>
<comment type="online information" name="National Center for Biotechnology Information (NCBI)">
    <link uri="https://www.ncbi.nlm.nih.gov/nuccore/GASI01000127"/>
</comment>
<proteinExistence type="inferred from homology"/>
<accession>P0DQG4</accession>
<protein>
    <recommendedName>
        <fullName evidence="2">U-scoloptoxin(16)-Er10a</fullName>
        <shortName evidence="2">U-SLPTX(16)-Er10a</shortName>
    </recommendedName>
</protein>
<feature type="signal peptide" evidence="1">
    <location>
        <begin position="1"/>
        <end position="24"/>
    </location>
</feature>
<feature type="chain" id="PRO_0000446817" description="U-scoloptoxin(16)-Er10a" evidence="3">
    <location>
        <begin position="25"/>
        <end position="108"/>
    </location>
</feature>
<dbReference type="SMR" id="P0DQG4"/>
<dbReference type="GO" id="GO:0005576">
    <property type="term" value="C:extracellular region"/>
    <property type="evidence" value="ECO:0007669"/>
    <property type="project" value="UniProtKB-SubCell"/>
</dbReference>
<dbReference type="GO" id="GO:0090729">
    <property type="term" value="F:toxin activity"/>
    <property type="evidence" value="ECO:0007669"/>
    <property type="project" value="UniProtKB-KW"/>
</dbReference>
<dbReference type="InterPro" id="IPR029277">
    <property type="entry name" value="SVWC_dom"/>
</dbReference>
<dbReference type="Pfam" id="PF15430">
    <property type="entry name" value="SVWC"/>
    <property type="match status" value="1"/>
</dbReference>
<dbReference type="SMART" id="SM01318">
    <property type="entry name" value="SVWC"/>
    <property type="match status" value="1"/>
</dbReference>
<name>TXGAA_ETHRU</name>
<reference key="1">
    <citation type="journal article" date="2014" name="Mol. Biol. Evol.">
        <title>Clawing through evolution: toxin diversification and convergence in the ancient lineage Chilopoda (centipedes).</title>
        <authorList>
            <person name="Undheim E.A."/>
            <person name="Jones A."/>
            <person name="Clauser K.R."/>
            <person name="Holland J.W."/>
            <person name="Pineda S.S."/>
            <person name="King G.F."/>
            <person name="Fry B.G."/>
        </authorList>
    </citation>
    <scope>NUCLEOTIDE SEQUENCE [MRNA]</scope>
    <scope>NOMENCLATURE</scope>
    <source>
        <tissue>Venom gland</tissue>
    </source>
</reference>
<keyword id="KW-1015">Disulfide bond</keyword>
<keyword id="KW-0964">Secreted</keyword>
<keyword id="KW-0732">Signal</keyword>
<keyword id="KW-0800">Toxin</keyword>